<protein>
    <recommendedName>
        <fullName evidence="1">Small ribosomal subunit protein uS19</fullName>
    </recommendedName>
    <alternativeName>
        <fullName evidence="2">30S ribosomal protein S19</fullName>
    </alternativeName>
</protein>
<feature type="chain" id="PRO_0000265360" description="Small ribosomal subunit protein uS19">
    <location>
        <begin position="1"/>
        <end position="92"/>
    </location>
</feature>
<name>RS19_ECOL5</name>
<evidence type="ECO:0000255" key="1">
    <source>
        <dbReference type="HAMAP-Rule" id="MF_00531"/>
    </source>
</evidence>
<evidence type="ECO:0000305" key="2"/>
<accession>Q0TCE5</accession>
<reference key="1">
    <citation type="journal article" date="2006" name="Mol. Microbiol.">
        <title>Role of pathogenicity island-associated integrases in the genome plasticity of uropathogenic Escherichia coli strain 536.</title>
        <authorList>
            <person name="Hochhut B."/>
            <person name="Wilde C."/>
            <person name="Balling G."/>
            <person name="Middendorf B."/>
            <person name="Dobrindt U."/>
            <person name="Brzuszkiewicz E."/>
            <person name="Gottschalk G."/>
            <person name="Carniel E."/>
            <person name="Hacker J."/>
        </authorList>
    </citation>
    <scope>NUCLEOTIDE SEQUENCE [LARGE SCALE GENOMIC DNA]</scope>
    <source>
        <strain>536 / UPEC</strain>
    </source>
</reference>
<organism>
    <name type="scientific">Escherichia coli O6:K15:H31 (strain 536 / UPEC)</name>
    <dbReference type="NCBI Taxonomy" id="362663"/>
    <lineage>
        <taxon>Bacteria</taxon>
        <taxon>Pseudomonadati</taxon>
        <taxon>Pseudomonadota</taxon>
        <taxon>Gammaproteobacteria</taxon>
        <taxon>Enterobacterales</taxon>
        <taxon>Enterobacteriaceae</taxon>
        <taxon>Escherichia</taxon>
    </lineage>
</organism>
<sequence length="92" mass="10430">MPRSLKKGPFIDLHLLKKVEKAVESGDKKPLRTWSRRSTIFPNMIGLTIAVHNGRQHVPVFVTDEMVGHKLGEFAPTRTYRGHAADKKAKKK</sequence>
<keyword id="KW-0687">Ribonucleoprotein</keyword>
<keyword id="KW-0689">Ribosomal protein</keyword>
<keyword id="KW-0694">RNA-binding</keyword>
<keyword id="KW-0699">rRNA-binding</keyword>
<comment type="function">
    <text evidence="1">Protein S19 forms a complex with S13 that binds strongly to the 16S ribosomal RNA.</text>
</comment>
<comment type="similarity">
    <text evidence="1">Belongs to the universal ribosomal protein uS19 family.</text>
</comment>
<gene>
    <name evidence="1" type="primary">rpsS</name>
    <name type="ordered locus">ECP_3404</name>
</gene>
<proteinExistence type="inferred from homology"/>
<dbReference type="EMBL" id="CP000247">
    <property type="protein sequence ID" value="ABG71384.1"/>
    <property type="molecule type" value="Genomic_DNA"/>
</dbReference>
<dbReference type="RefSeq" id="WP_001138117.1">
    <property type="nucleotide sequence ID" value="NC_008253.1"/>
</dbReference>
<dbReference type="SMR" id="Q0TCE5"/>
<dbReference type="GeneID" id="98390438"/>
<dbReference type="KEGG" id="ecp:ECP_3404"/>
<dbReference type="HOGENOM" id="CLU_144911_0_1_6"/>
<dbReference type="Proteomes" id="UP000009182">
    <property type="component" value="Chromosome"/>
</dbReference>
<dbReference type="GO" id="GO:0005737">
    <property type="term" value="C:cytoplasm"/>
    <property type="evidence" value="ECO:0007669"/>
    <property type="project" value="UniProtKB-ARBA"/>
</dbReference>
<dbReference type="GO" id="GO:0015935">
    <property type="term" value="C:small ribosomal subunit"/>
    <property type="evidence" value="ECO:0007669"/>
    <property type="project" value="InterPro"/>
</dbReference>
<dbReference type="GO" id="GO:0019843">
    <property type="term" value="F:rRNA binding"/>
    <property type="evidence" value="ECO:0007669"/>
    <property type="project" value="UniProtKB-UniRule"/>
</dbReference>
<dbReference type="GO" id="GO:0003735">
    <property type="term" value="F:structural constituent of ribosome"/>
    <property type="evidence" value="ECO:0007669"/>
    <property type="project" value="InterPro"/>
</dbReference>
<dbReference type="GO" id="GO:0000028">
    <property type="term" value="P:ribosomal small subunit assembly"/>
    <property type="evidence" value="ECO:0007669"/>
    <property type="project" value="TreeGrafter"/>
</dbReference>
<dbReference type="GO" id="GO:0006412">
    <property type="term" value="P:translation"/>
    <property type="evidence" value="ECO:0007669"/>
    <property type="project" value="UniProtKB-UniRule"/>
</dbReference>
<dbReference type="FunFam" id="3.30.860.10:FF:000001">
    <property type="entry name" value="30S ribosomal protein S19"/>
    <property type="match status" value="1"/>
</dbReference>
<dbReference type="Gene3D" id="3.30.860.10">
    <property type="entry name" value="30s Ribosomal Protein S19, Chain A"/>
    <property type="match status" value="1"/>
</dbReference>
<dbReference type="HAMAP" id="MF_00531">
    <property type="entry name" value="Ribosomal_uS19"/>
    <property type="match status" value="1"/>
</dbReference>
<dbReference type="InterPro" id="IPR002222">
    <property type="entry name" value="Ribosomal_uS19"/>
</dbReference>
<dbReference type="InterPro" id="IPR005732">
    <property type="entry name" value="Ribosomal_uS19_bac-type"/>
</dbReference>
<dbReference type="InterPro" id="IPR020934">
    <property type="entry name" value="Ribosomal_uS19_CS"/>
</dbReference>
<dbReference type="InterPro" id="IPR023575">
    <property type="entry name" value="Ribosomal_uS19_SF"/>
</dbReference>
<dbReference type="NCBIfam" id="TIGR01050">
    <property type="entry name" value="rpsS_bact"/>
    <property type="match status" value="1"/>
</dbReference>
<dbReference type="PANTHER" id="PTHR11880">
    <property type="entry name" value="RIBOSOMAL PROTEIN S19P FAMILY MEMBER"/>
    <property type="match status" value="1"/>
</dbReference>
<dbReference type="PANTHER" id="PTHR11880:SF8">
    <property type="entry name" value="SMALL RIBOSOMAL SUBUNIT PROTEIN US19M"/>
    <property type="match status" value="1"/>
</dbReference>
<dbReference type="Pfam" id="PF00203">
    <property type="entry name" value="Ribosomal_S19"/>
    <property type="match status" value="1"/>
</dbReference>
<dbReference type="PIRSF" id="PIRSF002144">
    <property type="entry name" value="Ribosomal_S19"/>
    <property type="match status" value="1"/>
</dbReference>
<dbReference type="PRINTS" id="PR00975">
    <property type="entry name" value="RIBOSOMALS19"/>
</dbReference>
<dbReference type="SUPFAM" id="SSF54570">
    <property type="entry name" value="Ribosomal protein S19"/>
    <property type="match status" value="1"/>
</dbReference>
<dbReference type="PROSITE" id="PS00323">
    <property type="entry name" value="RIBOSOMAL_S19"/>
    <property type="match status" value="1"/>
</dbReference>